<dbReference type="EMBL" id="AE008691">
    <property type="protein sequence ID" value="AAM24595.1"/>
    <property type="molecule type" value="Genomic_DNA"/>
</dbReference>
<dbReference type="RefSeq" id="WP_009610678.1">
    <property type="nucleotide sequence ID" value="NC_003869.1"/>
</dbReference>
<dbReference type="SMR" id="Q8RA56"/>
<dbReference type="STRING" id="273068.TTE1373"/>
<dbReference type="KEGG" id="tte:TTE1373"/>
<dbReference type="eggNOG" id="COG2137">
    <property type="taxonomic scope" value="Bacteria"/>
</dbReference>
<dbReference type="HOGENOM" id="CLU_066607_4_1_9"/>
<dbReference type="OrthoDB" id="5421057at2"/>
<dbReference type="Proteomes" id="UP000000555">
    <property type="component" value="Chromosome"/>
</dbReference>
<dbReference type="GO" id="GO:0005737">
    <property type="term" value="C:cytoplasm"/>
    <property type="evidence" value="ECO:0007669"/>
    <property type="project" value="UniProtKB-SubCell"/>
</dbReference>
<dbReference type="GO" id="GO:0006282">
    <property type="term" value="P:regulation of DNA repair"/>
    <property type="evidence" value="ECO:0007669"/>
    <property type="project" value="UniProtKB-UniRule"/>
</dbReference>
<dbReference type="Gene3D" id="1.10.10.10">
    <property type="entry name" value="Winged helix-like DNA-binding domain superfamily/Winged helix DNA-binding domain"/>
    <property type="match status" value="2"/>
</dbReference>
<dbReference type="HAMAP" id="MF_01114">
    <property type="entry name" value="RecX"/>
    <property type="match status" value="1"/>
</dbReference>
<dbReference type="InterPro" id="IPR053926">
    <property type="entry name" value="RecX_HTH_1st"/>
</dbReference>
<dbReference type="InterPro" id="IPR053924">
    <property type="entry name" value="RecX_HTH_2nd"/>
</dbReference>
<dbReference type="InterPro" id="IPR003783">
    <property type="entry name" value="Regulatory_RecX"/>
</dbReference>
<dbReference type="InterPro" id="IPR036388">
    <property type="entry name" value="WH-like_DNA-bd_sf"/>
</dbReference>
<dbReference type="PANTHER" id="PTHR33602">
    <property type="entry name" value="REGULATORY PROTEIN RECX FAMILY PROTEIN"/>
    <property type="match status" value="1"/>
</dbReference>
<dbReference type="PANTHER" id="PTHR33602:SF1">
    <property type="entry name" value="REGULATORY PROTEIN RECX FAMILY PROTEIN"/>
    <property type="match status" value="1"/>
</dbReference>
<dbReference type="Pfam" id="PF21982">
    <property type="entry name" value="RecX_HTH1"/>
    <property type="match status" value="1"/>
</dbReference>
<dbReference type="Pfam" id="PF02631">
    <property type="entry name" value="RecX_HTH2"/>
    <property type="match status" value="1"/>
</dbReference>
<name>RECX_CALS4</name>
<reference key="1">
    <citation type="journal article" date="2002" name="Genome Res.">
        <title>A complete sequence of the T. tengcongensis genome.</title>
        <authorList>
            <person name="Bao Q."/>
            <person name="Tian Y."/>
            <person name="Li W."/>
            <person name="Xu Z."/>
            <person name="Xuan Z."/>
            <person name="Hu S."/>
            <person name="Dong W."/>
            <person name="Yang J."/>
            <person name="Chen Y."/>
            <person name="Xue Y."/>
            <person name="Xu Y."/>
            <person name="Lai X."/>
            <person name="Huang L."/>
            <person name="Dong X."/>
            <person name="Ma Y."/>
            <person name="Ling L."/>
            <person name="Tan H."/>
            <person name="Chen R."/>
            <person name="Wang J."/>
            <person name="Yu J."/>
            <person name="Yang H."/>
        </authorList>
    </citation>
    <scope>NUCLEOTIDE SEQUENCE [LARGE SCALE GENOMIC DNA]</scope>
    <source>
        <strain>DSM 15242 / JCM 11007 / NBRC 100824 / MB4</strain>
    </source>
</reference>
<protein>
    <recommendedName>
        <fullName>Regulatory protein RecX</fullName>
    </recommendedName>
</protein>
<organism>
    <name type="scientific">Caldanaerobacter subterraneus subsp. tengcongensis (strain DSM 15242 / JCM 11007 / NBRC 100824 / MB4)</name>
    <name type="common">Thermoanaerobacter tengcongensis</name>
    <dbReference type="NCBI Taxonomy" id="273068"/>
    <lineage>
        <taxon>Bacteria</taxon>
        <taxon>Bacillati</taxon>
        <taxon>Bacillota</taxon>
        <taxon>Clostridia</taxon>
        <taxon>Thermoanaerobacterales</taxon>
        <taxon>Thermoanaerobacteraceae</taxon>
        <taxon>Caldanaerobacter</taxon>
    </lineage>
</organism>
<accession>Q8RA56</accession>
<feature type="chain" id="PRO_0000162488" description="Regulatory protein RecX">
    <location>
        <begin position="1"/>
        <end position="197"/>
    </location>
</feature>
<proteinExistence type="inferred from homology"/>
<evidence type="ECO:0000250" key="1"/>
<evidence type="ECO:0000305" key="2"/>
<gene>
    <name type="primary">recX</name>
    <name type="ordered locus">TTE1373</name>
</gene>
<keyword id="KW-0963">Cytoplasm</keyword>
<keyword id="KW-1185">Reference proteome</keyword>
<sequence length="197" mass="23552">MLITRIIKREKSSKYDVFIDGEYAFTCDAETFFMLGIEEGKEITSEQYKYYVNYIEAKEAKNHAFRLLSRKMLTEKQLADKLKLKGFSEEAIGEAVSKAKEYDYVNDENYAKFFVEEKMQSLYSRRRIYYELLKRGVEKEIIEKVLESIYPHEKEVEVIRQIVEKKKNSHREIQKLKKYLYTNGFEIENIEKALNLT</sequence>
<comment type="function">
    <text evidence="1">Modulates RecA activity.</text>
</comment>
<comment type="subcellular location">
    <subcellularLocation>
        <location evidence="2">Cytoplasm</location>
    </subcellularLocation>
</comment>
<comment type="similarity">
    <text evidence="2">Belongs to the RecX family.</text>
</comment>